<reference key="1">
    <citation type="journal article" date="2003" name="Microbiology">
        <title>The complete genome sequence of the avian pathogen Mycoplasma gallisepticum strain R(low).</title>
        <authorList>
            <person name="Papazisi L."/>
            <person name="Gorton T.S."/>
            <person name="Kutish G."/>
            <person name="Markham P.F."/>
            <person name="Browning G.F."/>
            <person name="Nguyen D.K."/>
            <person name="Swartzell S."/>
            <person name="Madan A."/>
            <person name="Mahairas G."/>
            <person name="Geary S.J."/>
        </authorList>
    </citation>
    <scope>NUCLEOTIDE SEQUENCE [LARGE SCALE GENOMIC DNA]</scope>
    <source>
        <strain>R(low / passage 15 / clone 2)</strain>
    </source>
</reference>
<proteinExistence type="inferred from homology"/>
<evidence type="ECO:0000255" key="1">
    <source>
        <dbReference type="HAMAP-Rule" id="MF_00081"/>
    </source>
</evidence>
<evidence type="ECO:0000305" key="2"/>
<gene>
    <name evidence="1" type="primary">hrcA</name>
    <name type="ordered locus">MYCGA3540</name>
    <name type="ORF">MGA_1270</name>
</gene>
<protein>
    <recommendedName>
        <fullName evidence="1">Heat-inducible transcription repressor HrcA</fullName>
    </recommendedName>
</protein>
<keyword id="KW-1185">Reference proteome</keyword>
<keyword id="KW-0678">Repressor</keyword>
<keyword id="KW-0346">Stress response</keyword>
<keyword id="KW-0804">Transcription</keyword>
<keyword id="KW-0805">Transcription regulation</keyword>
<dbReference type="EMBL" id="AE015450">
    <property type="protein sequence ID" value="AAP56704.1"/>
    <property type="status" value="ALT_INIT"/>
    <property type="molecule type" value="Genomic_DNA"/>
</dbReference>
<dbReference type="RefSeq" id="WP_011884393.1">
    <property type="nucleotide sequence ID" value="NC_004829.2"/>
</dbReference>
<dbReference type="SMR" id="Q7NBC5"/>
<dbReference type="GeneID" id="93510186"/>
<dbReference type="KEGG" id="mga:MGA_1270"/>
<dbReference type="HOGENOM" id="CLU_050019_1_0_14"/>
<dbReference type="Proteomes" id="UP000001418">
    <property type="component" value="Chromosome"/>
</dbReference>
<dbReference type="GO" id="GO:0003677">
    <property type="term" value="F:DNA binding"/>
    <property type="evidence" value="ECO:0007669"/>
    <property type="project" value="InterPro"/>
</dbReference>
<dbReference type="GO" id="GO:0045892">
    <property type="term" value="P:negative regulation of DNA-templated transcription"/>
    <property type="evidence" value="ECO:0007669"/>
    <property type="project" value="UniProtKB-UniRule"/>
</dbReference>
<dbReference type="Gene3D" id="3.30.450.40">
    <property type="match status" value="1"/>
</dbReference>
<dbReference type="Gene3D" id="3.30.390.60">
    <property type="entry name" value="Heat-inducible transcription repressor hrca homolog, domain 3"/>
    <property type="match status" value="1"/>
</dbReference>
<dbReference type="Gene3D" id="1.10.10.10">
    <property type="entry name" value="Winged helix-like DNA-binding domain superfamily/Winged helix DNA-binding domain"/>
    <property type="match status" value="1"/>
</dbReference>
<dbReference type="HAMAP" id="MF_00081">
    <property type="entry name" value="HrcA"/>
    <property type="match status" value="1"/>
</dbReference>
<dbReference type="InterPro" id="IPR029016">
    <property type="entry name" value="GAF-like_dom_sf"/>
</dbReference>
<dbReference type="InterPro" id="IPR002571">
    <property type="entry name" value="HrcA"/>
</dbReference>
<dbReference type="InterPro" id="IPR021153">
    <property type="entry name" value="HrcA_C"/>
</dbReference>
<dbReference type="InterPro" id="IPR036388">
    <property type="entry name" value="WH-like_DNA-bd_sf"/>
</dbReference>
<dbReference type="InterPro" id="IPR036390">
    <property type="entry name" value="WH_DNA-bd_sf"/>
</dbReference>
<dbReference type="InterPro" id="IPR023120">
    <property type="entry name" value="WHTH_transcript_rep_HrcA_IDD"/>
</dbReference>
<dbReference type="NCBIfam" id="TIGR00331">
    <property type="entry name" value="hrcA"/>
    <property type="match status" value="1"/>
</dbReference>
<dbReference type="PANTHER" id="PTHR34824">
    <property type="entry name" value="HEAT-INDUCIBLE TRANSCRIPTION REPRESSOR HRCA"/>
    <property type="match status" value="1"/>
</dbReference>
<dbReference type="PANTHER" id="PTHR34824:SF1">
    <property type="entry name" value="HEAT-INDUCIBLE TRANSCRIPTION REPRESSOR HRCA"/>
    <property type="match status" value="1"/>
</dbReference>
<dbReference type="Pfam" id="PF01628">
    <property type="entry name" value="HrcA"/>
    <property type="match status" value="1"/>
</dbReference>
<dbReference type="PIRSF" id="PIRSF005485">
    <property type="entry name" value="HrcA"/>
    <property type="match status" value="1"/>
</dbReference>
<dbReference type="SUPFAM" id="SSF55781">
    <property type="entry name" value="GAF domain-like"/>
    <property type="match status" value="1"/>
</dbReference>
<dbReference type="SUPFAM" id="SSF46785">
    <property type="entry name" value="Winged helix' DNA-binding domain"/>
    <property type="match status" value="1"/>
</dbReference>
<sequence length="349" mass="40190">MNNKLTERQILILKAIINEYISTATAVGSKIILEKYFNNEVSSATIRNEMSVLEKEKYIEKPHTSAGRIPTIKGYQYYEANLAETKISERLKQKLMAILNKRYHSIDEVIEQSVEFINNVTNLPSVITKFKSYDLLKRMDLIKINNNTAIILIVSSSGEVIKKTIKYQNSIQYNDVSTCVQIFNDRLVDTPFIELKEKLTAIKEIVRTKVHEYEFVMQRIVNYIFDINEKSTINIKGTKKLVIHPEFHDHNKLSEILNLLENTSIWEQISFMQQKTGKSVITFGQDIGIEGISVASTLIETEQNKHQIAIVGPNRMEYGKIKGLLNILKEQVEKIDHLNLPLEEINKES</sequence>
<organism>
    <name type="scientific">Mycoplasmoides gallisepticum (strain R(low / passage 15 / clone 2))</name>
    <name type="common">Mycoplasma gallisepticum</name>
    <dbReference type="NCBI Taxonomy" id="710127"/>
    <lineage>
        <taxon>Bacteria</taxon>
        <taxon>Bacillati</taxon>
        <taxon>Mycoplasmatota</taxon>
        <taxon>Mycoplasmoidales</taxon>
        <taxon>Mycoplasmoidaceae</taxon>
        <taxon>Mycoplasmoides</taxon>
    </lineage>
</organism>
<comment type="function">
    <text evidence="1">Negative regulator of class I heat shock genes (grpE-dnaK-dnaJ and groELS operons). Prevents heat-shock induction of these operons.</text>
</comment>
<comment type="similarity">
    <text evidence="1">Belongs to the HrcA family.</text>
</comment>
<comment type="sequence caution" evidence="2">
    <conflict type="erroneous initiation">
        <sequence resource="EMBL-CDS" id="AAP56704"/>
    </conflict>
</comment>
<name>HRCA_MYCGA</name>
<feature type="chain" id="PRO_0000182502" description="Heat-inducible transcription repressor HrcA">
    <location>
        <begin position="1"/>
        <end position="349"/>
    </location>
</feature>
<accession>Q7NBC5</accession>